<dbReference type="EMBL" id="AP006714">
    <property type="protein sequence ID" value="BAD27302.1"/>
    <property type="molecule type" value="Genomic_DNA"/>
</dbReference>
<dbReference type="RefSeq" id="YP_009389580.1">
    <property type="nucleotide sequence ID" value="NC_035224.1"/>
</dbReference>
<dbReference type="SMR" id="Q6ENV4"/>
<dbReference type="GeneID" id="33347832"/>
<dbReference type="GO" id="GO:0009535">
    <property type="term" value="C:chloroplast thylakoid membrane"/>
    <property type="evidence" value="ECO:0007669"/>
    <property type="project" value="UniProtKB-SubCell"/>
</dbReference>
<dbReference type="GO" id="GO:0009522">
    <property type="term" value="C:photosystem I"/>
    <property type="evidence" value="ECO:0007669"/>
    <property type="project" value="UniProtKB-KW"/>
</dbReference>
<dbReference type="GO" id="GO:0015979">
    <property type="term" value="P:photosynthesis"/>
    <property type="evidence" value="ECO:0007669"/>
    <property type="project" value="UniProtKB-UniRule"/>
</dbReference>
<dbReference type="HAMAP" id="MF_00431">
    <property type="entry name" value="PSI_PsaI"/>
    <property type="match status" value="1"/>
</dbReference>
<dbReference type="InterPro" id="IPR001302">
    <property type="entry name" value="PSI_PsaI"/>
</dbReference>
<dbReference type="InterPro" id="IPR036357">
    <property type="entry name" value="PSI_PsaI_sf"/>
</dbReference>
<dbReference type="NCBIfam" id="TIGR03052">
    <property type="entry name" value="PS_I_psaI"/>
    <property type="match status" value="1"/>
</dbReference>
<dbReference type="PANTHER" id="PTHR35775">
    <property type="match status" value="1"/>
</dbReference>
<dbReference type="PANTHER" id="PTHR35775:SF2">
    <property type="entry name" value="PHOTOSYSTEM I REACTION CENTER SUBUNIT VIII"/>
    <property type="match status" value="1"/>
</dbReference>
<dbReference type="Pfam" id="PF00796">
    <property type="entry name" value="PSI_8"/>
    <property type="match status" value="1"/>
</dbReference>
<dbReference type="SUPFAM" id="SSF81540">
    <property type="entry name" value="Subunit VIII of photosystem I reaction centre, PsaI"/>
    <property type="match status" value="1"/>
</dbReference>
<protein>
    <recommendedName>
        <fullName evidence="1">Photosystem I reaction center subunit VIII</fullName>
        <shortName evidence="1">PSI-I</shortName>
    </recommendedName>
</protein>
<feature type="chain" id="PRO_0000194675" description="Photosystem I reaction center subunit VIII">
    <location>
        <begin position="1"/>
        <end position="36"/>
    </location>
</feature>
<feature type="transmembrane region" description="Helical" evidence="1">
    <location>
        <begin position="10"/>
        <end position="29"/>
    </location>
</feature>
<name>PSAI_SACOF</name>
<geneLocation type="chloroplast"/>
<keyword id="KW-0150">Chloroplast</keyword>
<keyword id="KW-0472">Membrane</keyword>
<keyword id="KW-0602">Photosynthesis</keyword>
<keyword id="KW-0603">Photosystem I</keyword>
<keyword id="KW-0934">Plastid</keyword>
<keyword id="KW-0793">Thylakoid</keyword>
<keyword id="KW-0812">Transmembrane</keyword>
<keyword id="KW-1133">Transmembrane helix</keyword>
<gene>
    <name evidence="1" type="primary">psaI</name>
</gene>
<organism>
    <name type="scientific">Saccharum officinarum</name>
    <name type="common">Sugarcane</name>
    <dbReference type="NCBI Taxonomy" id="4547"/>
    <lineage>
        <taxon>Eukaryota</taxon>
        <taxon>Viridiplantae</taxon>
        <taxon>Streptophyta</taxon>
        <taxon>Embryophyta</taxon>
        <taxon>Tracheophyta</taxon>
        <taxon>Spermatophyta</taxon>
        <taxon>Magnoliopsida</taxon>
        <taxon>Liliopsida</taxon>
        <taxon>Poales</taxon>
        <taxon>Poaceae</taxon>
        <taxon>PACMAD clade</taxon>
        <taxon>Panicoideae</taxon>
        <taxon>Andropogonodae</taxon>
        <taxon>Andropogoneae</taxon>
        <taxon>Saccharinae</taxon>
        <taxon>Saccharum</taxon>
        <taxon>Saccharum officinarum species complex</taxon>
    </lineage>
</organism>
<comment type="function">
    <text evidence="1">May help in the organization of the PsaL subunit.</text>
</comment>
<comment type="subcellular location">
    <subcellularLocation>
        <location evidence="1">Plastid</location>
        <location evidence="1">Chloroplast thylakoid membrane</location>
        <topology evidence="1">Single-pass membrane protein</topology>
    </subcellularLocation>
</comment>
<comment type="similarity">
    <text evidence="1">Belongs to the PsaI family.</text>
</comment>
<accession>Q6ENV4</accession>
<evidence type="ECO:0000255" key="1">
    <source>
        <dbReference type="HAMAP-Rule" id="MF_00431"/>
    </source>
</evidence>
<sequence>MTDLNLPSIFVPLVGLVFPAIAMTSLFLYVQKNKIV</sequence>
<reference key="1">
    <citation type="journal article" date="2004" name="DNA Res.">
        <title>Complete nucleotide sequence of the sugarcane (Saccharum officinarum) chloroplast genome: a comparative analysis of four monocot chloroplast genomes.</title>
        <authorList>
            <person name="Asano T."/>
            <person name="Tsudzuki T."/>
            <person name="Takahashi S."/>
            <person name="Shimada H."/>
            <person name="Kadowaki K."/>
        </authorList>
    </citation>
    <scope>NUCLEOTIDE SEQUENCE [LARGE SCALE GENOMIC DNA]</scope>
</reference>
<proteinExistence type="inferred from homology"/>